<keyword id="KW-0687">Ribonucleoprotein</keyword>
<keyword id="KW-0689">Ribosomal protein</keyword>
<protein>
    <recommendedName>
        <fullName evidence="1">Small ribosomal subunit protein uS10</fullName>
    </recommendedName>
    <alternativeName>
        <fullName evidence="2">30S ribosomal protein S10</fullName>
    </alternativeName>
</protein>
<sequence length="102" mass="11582">MANKKIRIRLKAYKHRTLDTAAAKIVESATRTGAQVAGPIPLPTERSLYTIIRATHKYKDSREQFEMRTHKRLIDIVNPTQKTVDALMKLDLPSGVNVEIKL</sequence>
<comment type="function">
    <text evidence="1">Involved in the binding of tRNA to the ribosomes.</text>
</comment>
<comment type="subunit">
    <text evidence="1">Part of the 30S ribosomal subunit.</text>
</comment>
<comment type="similarity">
    <text evidence="1">Belongs to the universal ribosomal protein uS10 family.</text>
</comment>
<feature type="chain" id="PRO_1000146083" description="Small ribosomal subunit protein uS10">
    <location>
        <begin position="1"/>
        <end position="102"/>
    </location>
</feature>
<evidence type="ECO:0000255" key="1">
    <source>
        <dbReference type="HAMAP-Rule" id="MF_00508"/>
    </source>
</evidence>
<evidence type="ECO:0000305" key="2"/>
<organism>
    <name type="scientific">Streptococcus pneumoniae (strain Taiwan19F-14)</name>
    <dbReference type="NCBI Taxonomy" id="487213"/>
    <lineage>
        <taxon>Bacteria</taxon>
        <taxon>Bacillati</taxon>
        <taxon>Bacillota</taxon>
        <taxon>Bacilli</taxon>
        <taxon>Lactobacillales</taxon>
        <taxon>Streptococcaceae</taxon>
        <taxon>Streptococcus</taxon>
    </lineage>
</organism>
<proteinExistence type="inferred from homology"/>
<dbReference type="EMBL" id="CP000921">
    <property type="protein sequence ID" value="ACO23466.1"/>
    <property type="molecule type" value="Genomic_DNA"/>
</dbReference>
<dbReference type="RefSeq" id="WP_001284521.1">
    <property type="nucleotide sequence ID" value="NC_012469.1"/>
</dbReference>
<dbReference type="SMR" id="C1CP87"/>
<dbReference type="KEGG" id="snt:SPT_0255"/>
<dbReference type="HOGENOM" id="CLU_122625_1_3_9"/>
<dbReference type="GO" id="GO:1990904">
    <property type="term" value="C:ribonucleoprotein complex"/>
    <property type="evidence" value="ECO:0007669"/>
    <property type="project" value="UniProtKB-KW"/>
</dbReference>
<dbReference type="GO" id="GO:0005840">
    <property type="term" value="C:ribosome"/>
    <property type="evidence" value="ECO:0007669"/>
    <property type="project" value="UniProtKB-KW"/>
</dbReference>
<dbReference type="GO" id="GO:0003735">
    <property type="term" value="F:structural constituent of ribosome"/>
    <property type="evidence" value="ECO:0007669"/>
    <property type="project" value="InterPro"/>
</dbReference>
<dbReference type="GO" id="GO:0000049">
    <property type="term" value="F:tRNA binding"/>
    <property type="evidence" value="ECO:0007669"/>
    <property type="project" value="UniProtKB-UniRule"/>
</dbReference>
<dbReference type="GO" id="GO:0006412">
    <property type="term" value="P:translation"/>
    <property type="evidence" value="ECO:0007669"/>
    <property type="project" value="UniProtKB-UniRule"/>
</dbReference>
<dbReference type="FunFam" id="3.30.70.600:FF:000001">
    <property type="entry name" value="30S ribosomal protein S10"/>
    <property type="match status" value="1"/>
</dbReference>
<dbReference type="Gene3D" id="3.30.70.600">
    <property type="entry name" value="Ribosomal protein S10 domain"/>
    <property type="match status" value="1"/>
</dbReference>
<dbReference type="HAMAP" id="MF_00508">
    <property type="entry name" value="Ribosomal_uS10"/>
    <property type="match status" value="1"/>
</dbReference>
<dbReference type="InterPro" id="IPR001848">
    <property type="entry name" value="Ribosomal_uS10"/>
</dbReference>
<dbReference type="InterPro" id="IPR018268">
    <property type="entry name" value="Ribosomal_uS10_CS"/>
</dbReference>
<dbReference type="InterPro" id="IPR027486">
    <property type="entry name" value="Ribosomal_uS10_dom"/>
</dbReference>
<dbReference type="InterPro" id="IPR036838">
    <property type="entry name" value="Ribosomal_uS10_dom_sf"/>
</dbReference>
<dbReference type="NCBIfam" id="NF001861">
    <property type="entry name" value="PRK00596.1"/>
    <property type="match status" value="1"/>
</dbReference>
<dbReference type="NCBIfam" id="TIGR01049">
    <property type="entry name" value="rpsJ_bact"/>
    <property type="match status" value="1"/>
</dbReference>
<dbReference type="PANTHER" id="PTHR11700">
    <property type="entry name" value="30S RIBOSOMAL PROTEIN S10 FAMILY MEMBER"/>
    <property type="match status" value="1"/>
</dbReference>
<dbReference type="Pfam" id="PF00338">
    <property type="entry name" value="Ribosomal_S10"/>
    <property type="match status" value="1"/>
</dbReference>
<dbReference type="PRINTS" id="PR00971">
    <property type="entry name" value="RIBOSOMALS10"/>
</dbReference>
<dbReference type="SMART" id="SM01403">
    <property type="entry name" value="Ribosomal_S10"/>
    <property type="match status" value="1"/>
</dbReference>
<dbReference type="SUPFAM" id="SSF54999">
    <property type="entry name" value="Ribosomal protein S10"/>
    <property type="match status" value="1"/>
</dbReference>
<dbReference type="PROSITE" id="PS00361">
    <property type="entry name" value="RIBOSOMAL_S10"/>
    <property type="match status" value="1"/>
</dbReference>
<reference key="1">
    <citation type="journal article" date="2010" name="Genome Biol.">
        <title>Structure and dynamics of the pan-genome of Streptococcus pneumoniae and closely related species.</title>
        <authorList>
            <person name="Donati C."/>
            <person name="Hiller N.L."/>
            <person name="Tettelin H."/>
            <person name="Muzzi A."/>
            <person name="Croucher N.J."/>
            <person name="Angiuoli S.V."/>
            <person name="Oggioni M."/>
            <person name="Dunning Hotopp J.C."/>
            <person name="Hu F.Z."/>
            <person name="Riley D.R."/>
            <person name="Covacci A."/>
            <person name="Mitchell T.J."/>
            <person name="Bentley S.D."/>
            <person name="Kilian M."/>
            <person name="Ehrlich G.D."/>
            <person name="Rappuoli R."/>
            <person name="Moxon E.R."/>
            <person name="Masignani V."/>
        </authorList>
    </citation>
    <scope>NUCLEOTIDE SEQUENCE [LARGE SCALE GENOMIC DNA]</scope>
    <source>
        <strain>Taiwan19F-14</strain>
    </source>
</reference>
<accession>C1CP87</accession>
<gene>
    <name evidence="1" type="primary">rpsJ</name>
    <name type="ordered locus">SPT_0255</name>
</gene>
<name>RS10_STRZT</name>